<accession>B7NBQ8</accession>
<keyword id="KW-0963">Cytoplasm</keyword>
<keyword id="KW-0227">DNA damage</keyword>
<keyword id="KW-0228">DNA excision</keyword>
<keyword id="KW-0234">DNA repair</keyword>
<keyword id="KW-0267">Excision nuclease</keyword>
<keyword id="KW-0742">SOS response</keyword>
<dbReference type="EMBL" id="CU928163">
    <property type="protein sequence ID" value="CAR13398.1"/>
    <property type="molecule type" value="Genomic_DNA"/>
</dbReference>
<dbReference type="RefSeq" id="WP_001283421.1">
    <property type="nucleotide sequence ID" value="NC_011751.1"/>
</dbReference>
<dbReference type="RefSeq" id="YP_002412927.1">
    <property type="nucleotide sequence ID" value="NC_011751.1"/>
</dbReference>
<dbReference type="SMR" id="B7NBQ8"/>
<dbReference type="STRING" id="585056.ECUMN_2205"/>
<dbReference type="GeneID" id="93776218"/>
<dbReference type="KEGG" id="eum:ECUMN_2205"/>
<dbReference type="PATRIC" id="fig|585056.7.peg.2393"/>
<dbReference type="HOGENOM" id="CLU_014841_3_0_6"/>
<dbReference type="Proteomes" id="UP000007097">
    <property type="component" value="Chromosome"/>
</dbReference>
<dbReference type="GO" id="GO:0005737">
    <property type="term" value="C:cytoplasm"/>
    <property type="evidence" value="ECO:0007669"/>
    <property type="project" value="UniProtKB-SubCell"/>
</dbReference>
<dbReference type="GO" id="GO:0009380">
    <property type="term" value="C:excinuclease repair complex"/>
    <property type="evidence" value="ECO:0007669"/>
    <property type="project" value="InterPro"/>
</dbReference>
<dbReference type="GO" id="GO:0003677">
    <property type="term" value="F:DNA binding"/>
    <property type="evidence" value="ECO:0007669"/>
    <property type="project" value="UniProtKB-UniRule"/>
</dbReference>
<dbReference type="GO" id="GO:0009381">
    <property type="term" value="F:excinuclease ABC activity"/>
    <property type="evidence" value="ECO:0007669"/>
    <property type="project" value="UniProtKB-UniRule"/>
</dbReference>
<dbReference type="GO" id="GO:0006289">
    <property type="term" value="P:nucleotide-excision repair"/>
    <property type="evidence" value="ECO:0007669"/>
    <property type="project" value="UniProtKB-UniRule"/>
</dbReference>
<dbReference type="GO" id="GO:0009432">
    <property type="term" value="P:SOS response"/>
    <property type="evidence" value="ECO:0007669"/>
    <property type="project" value="UniProtKB-UniRule"/>
</dbReference>
<dbReference type="CDD" id="cd10434">
    <property type="entry name" value="GIY-YIG_UvrC_Cho"/>
    <property type="match status" value="1"/>
</dbReference>
<dbReference type="FunFam" id="1.10.150.20:FF:000005">
    <property type="entry name" value="UvrABC system protein C"/>
    <property type="match status" value="1"/>
</dbReference>
<dbReference type="FunFam" id="3.30.420.340:FF:000001">
    <property type="entry name" value="UvrABC system protein C"/>
    <property type="match status" value="1"/>
</dbReference>
<dbReference type="FunFam" id="3.40.1440.10:FF:000001">
    <property type="entry name" value="UvrABC system protein C"/>
    <property type="match status" value="1"/>
</dbReference>
<dbReference type="FunFam" id="4.10.860.10:FF:000002">
    <property type="entry name" value="UvrABC system protein C"/>
    <property type="match status" value="1"/>
</dbReference>
<dbReference type="Gene3D" id="1.10.150.20">
    <property type="entry name" value="5' to 3' exonuclease, C-terminal subdomain"/>
    <property type="match status" value="1"/>
</dbReference>
<dbReference type="Gene3D" id="3.40.1440.10">
    <property type="entry name" value="GIY-YIG endonuclease"/>
    <property type="match status" value="1"/>
</dbReference>
<dbReference type="Gene3D" id="4.10.860.10">
    <property type="entry name" value="UVR domain"/>
    <property type="match status" value="1"/>
</dbReference>
<dbReference type="Gene3D" id="3.30.420.340">
    <property type="entry name" value="UvrC, RNAse H endonuclease domain"/>
    <property type="match status" value="1"/>
</dbReference>
<dbReference type="HAMAP" id="MF_00203">
    <property type="entry name" value="UvrC"/>
    <property type="match status" value="1"/>
</dbReference>
<dbReference type="InterPro" id="IPR000305">
    <property type="entry name" value="GIY-YIG_endonuc"/>
</dbReference>
<dbReference type="InterPro" id="IPR035901">
    <property type="entry name" value="GIY-YIG_endonuc_sf"/>
</dbReference>
<dbReference type="InterPro" id="IPR047296">
    <property type="entry name" value="GIY-YIG_UvrC_Cho"/>
</dbReference>
<dbReference type="InterPro" id="IPR003583">
    <property type="entry name" value="Hlx-hairpin-Hlx_DNA-bd_motif"/>
</dbReference>
<dbReference type="InterPro" id="IPR010994">
    <property type="entry name" value="RuvA_2-like"/>
</dbReference>
<dbReference type="InterPro" id="IPR001943">
    <property type="entry name" value="UVR_dom"/>
</dbReference>
<dbReference type="InterPro" id="IPR036876">
    <property type="entry name" value="UVR_dom_sf"/>
</dbReference>
<dbReference type="InterPro" id="IPR050066">
    <property type="entry name" value="UvrABC_protein_C"/>
</dbReference>
<dbReference type="InterPro" id="IPR004791">
    <property type="entry name" value="UvrC"/>
</dbReference>
<dbReference type="InterPro" id="IPR001162">
    <property type="entry name" value="UvrC_RNase_H_dom"/>
</dbReference>
<dbReference type="InterPro" id="IPR038476">
    <property type="entry name" value="UvrC_RNase_H_dom_sf"/>
</dbReference>
<dbReference type="NCBIfam" id="NF001824">
    <property type="entry name" value="PRK00558.1-5"/>
    <property type="match status" value="1"/>
</dbReference>
<dbReference type="NCBIfam" id="TIGR00194">
    <property type="entry name" value="uvrC"/>
    <property type="match status" value="1"/>
</dbReference>
<dbReference type="PANTHER" id="PTHR30562:SF1">
    <property type="entry name" value="UVRABC SYSTEM PROTEIN C"/>
    <property type="match status" value="1"/>
</dbReference>
<dbReference type="PANTHER" id="PTHR30562">
    <property type="entry name" value="UVRC/OXIDOREDUCTASE"/>
    <property type="match status" value="1"/>
</dbReference>
<dbReference type="Pfam" id="PF01541">
    <property type="entry name" value="GIY-YIG"/>
    <property type="match status" value="1"/>
</dbReference>
<dbReference type="Pfam" id="PF14520">
    <property type="entry name" value="HHH_5"/>
    <property type="match status" value="1"/>
</dbReference>
<dbReference type="Pfam" id="PF02151">
    <property type="entry name" value="UVR"/>
    <property type="match status" value="1"/>
</dbReference>
<dbReference type="Pfam" id="PF22920">
    <property type="entry name" value="UvrC_RNaseH"/>
    <property type="match status" value="1"/>
</dbReference>
<dbReference type="Pfam" id="PF08459">
    <property type="entry name" value="UvrC_RNaseH_dom"/>
    <property type="match status" value="1"/>
</dbReference>
<dbReference type="SMART" id="SM00465">
    <property type="entry name" value="GIYc"/>
    <property type="match status" value="1"/>
</dbReference>
<dbReference type="SMART" id="SM00278">
    <property type="entry name" value="HhH1"/>
    <property type="match status" value="2"/>
</dbReference>
<dbReference type="SUPFAM" id="SSF46600">
    <property type="entry name" value="C-terminal UvrC-binding domain of UvrB"/>
    <property type="match status" value="1"/>
</dbReference>
<dbReference type="SUPFAM" id="SSF82771">
    <property type="entry name" value="GIY-YIG endonuclease"/>
    <property type="match status" value="1"/>
</dbReference>
<dbReference type="SUPFAM" id="SSF47781">
    <property type="entry name" value="RuvA domain 2-like"/>
    <property type="match status" value="1"/>
</dbReference>
<dbReference type="PROSITE" id="PS50164">
    <property type="entry name" value="GIY_YIG"/>
    <property type="match status" value="1"/>
</dbReference>
<dbReference type="PROSITE" id="PS50151">
    <property type="entry name" value="UVR"/>
    <property type="match status" value="1"/>
</dbReference>
<dbReference type="PROSITE" id="PS50165">
    <property type="entry name" value="UVRC"/>
    <property type="match status" value="1"/>
</dbReference>
<proteinExistence type="inferred from homology"/>
<organism>
    <name type="scientific">Escherichia coli O17:K52:H18 (strain UMN026 / ExPEC)</name>
    <dbReference type="NCBI Taxonomy" id="585056"/>
    <lineage>
        <taxon>Bacteria</taxon>
        <taxon>Pseudomonadati</taxon>
        <taxon>Pseudomonadota</taxon>
        <taxon>Gammaproteobacteria</taxon>
        <taxon>Enterobacterales</taxon>
        <taxon>Enterobacteriaceae</taxon>
        <taxon>Escherichia</taxon>
    </lineage>
</organism>
<feature type="chain" id="PRO_1000200584" description="UvrABC system protein C">
    <location>
        <begin position="1"/>
        <end position="610"/>
    </location>
</feature>
<feature type="domain" description="GIY-YIG" evidence="1">
    <location>
        <begin position="16"/>
        <end position="94"/>
    </location>
</feature>
<feature type="domain" description="UVR" evidence="1">
    <location>
        <begin position="204"/>
        <end position="239"/>
    </location>
</feature>
<evidence type="ECO:0000255" key="1">
    <source>
        <dbReference type="HAMAP-Rule" id="MF_00203"/>
    </source>
</evidence>
<gene>
    <name evidence="1" type="primary">uvrC</name>
    <name type="ordered locus">ECUMN_2205</name>
</gene>
<reference key="1">
    <citation type="journal article" date="2009" name="PLoS Genet.">
        <title>Organised genome dynamics in the Escherichia coli species results in highly diverse adaptive paths.</title>
        <authorList>
            <person name="Touchon M."/>
            <person name="Hoede C."/>
            <person name="Tenaillon O."/>
            <person name="Barbe V."/>
            <person name="Baeriswyl S."/>
            <person name="Bidet P."/>
            <person name="Bingen E."/>
            <person name="Bonacorsi S."/>
            <person name="Bouchier C."/>
            <person name="Bouvet O."/>
            <person name="Calteau A."/>
            <person name="Chiapello H."/>
            <person name="Clermont O."/>
            <person name="Cruveiller S."/>
            <person name="Danchin A."/>
            <person name="Diard M."/>
            <person name="Dossat C."/>
            <person name="Karoui M.E."/>
            <person name="Frapy E."/>
            <person name="Garry L."/>
            <person name="Ghigo J.M."/>
            <person name="Gilles A.M."/>
            <person name="Johnson J."/>
            <person name="Le Bouguenec C."/>
            <person name="Lescat M."/>
            <person name="Mangenot S."/>
            <person name="Martinez-Jehanne V."/>
            <person name="Matic I."/>
            <person name="Nassif X."/>
            <person name="Oztas S."/>
            <person name="Petit M.A."/>
            <person name="Pichon C."/>
            <person name="Rouy Z."/>
            <person name="Ruf C.S."/>
            <person name="Schneider D."/>
            <person name="Tourret J."/>
            <person name="Vacherie B."/>
            <person name="Vallenet D."/>
            <person name="Medigue C."/>
            <person name="Rocha E.P.C."/>
            <person name="Denamur E."/>
        </authorList>
    </citation>
    <scope>NUCLEOTIDE SEQUENCE [LARGE SCALE GENOMIC DNA]</scope>
    <source>
        <strain>UMN026 / ExPEC</strain>
    </source>
</reference>
<protein>
    <recommendedName>
        <fullName evidence="1">UvrABC system protein C</fullName>
        <shortName evidence="1">Protein UvrC</shortName>
    </recommendedName>
    <alternativeName>
        <fullName evidence="1">Excinuclease ABC subunit C</fullName>
    </alternativeName>
</protein>
<comment type="function">
    <text evidence="1">The UvrABC repair system catalyzes the recognition and processing of DNA lesions. UvrC both incises the 5' and 3' sides of the lesion. The N-terminal half is responsible for the 3' incision and the C-terminal half is responsible for the 5' incision.</text>
</comment>
<comment type="subunit">
    <text evidence="1">Interacts with UvrB in an incision complex.</text>
</comment>
<comment type="subcellular location">
    <subcellularLocation>
        <location evidence="1">Cytoplasm</location>
    </subcellularLocation>
</comment>
<comment type="similarity">
    <text evidence="1">Belongs to the UvrC family.</text>
</comment>
<name>UVRC_ECOLU</name>
<sequence>MSDQFDAKAFLKTVTSQPGVYRMYDAGGTVIYVGKAKDLKKRLSSYFRSNLASRKTEALVAQIQQIDVTVTHTETEALLLEHNYIKLYQPRYNVLLRDDKSYPFIFLSGDTHPRLAMHRGAKHAKGEYFGPFPNGYAVRETLALLQKIFPIRQCENSVYRNRSRPCLQYQIGRCLGPCVEGLVSEEEYAQQVEYVRLFLSGKDDQVLTQLISRMETASQNLEFEEAARIRDQIQAVRRVTEKQFVSNTGDDLDVIGVAFDAGMACVHVLFIRQGKVLGSRSYFPKVPGGTELSEVVETFVGQFYLQGSQMRTLPGEILLDFNLSDKTLLADSLSELAGRKINVQTKPRGDRARYLKLARTNAATALTSKLSQQSTVHQRLTALASVLKLPEVKRMECFDISHTMGEQTVASCVVFDANGPLRAEYRRYNITGITPGDDYAAMNQVLRRRYGKAIDDSKIPDVILIDGGKGQLAQAKNVFAELDVSWDKNHPLLLGVAKGADRKAGLETLFFEPEGEGFSLPPDSPALHVIQHIRDESHDHAIGGHRKKRAKVKNTSSLETIEGVGPKRRQMLLKYMGGLQGLRNASVEEIAKVPGISQGLAEKIFWSLKH</sequence>